<comment type="function">
    <text evidence="1">Component of the gamma-tubulin ring complex (gTuRC) which mediates microtubule nucleation (By similarity). The gTuRC regulates the minus-end nucleation of alpha-beta tubulin heterodimers that grow into microtubule protafilaments, a critical step in centrosome duplication and spindle formation (By similarity).</text>
</comment>
<comment type="subunit">
    <text evidence="1">Component of the gamma-tubulin ring complex (gTuRC) consisting of TUBGCP2, TUBGCP3, TUBGCP4, TUBGCP5 and TUBGCP6 and gamma-tubulin TUBG1 or TUBG2 (By similarity). TUBGCP2, TUBGCP3, TUBGCP4, TUBGCP5 and TUBGCP6 assemble in a 5:5:2:1:1 stoichiometry; each is associated with a gamma-tubulin, thereby arranging 14 gamma-tubulins in a helical manner (By similarity). Gamma-tubulin at the first position is blocked by TUBGCP3 at the last position, allowing 13 protafilaments to grow into a microtubule (By similarity). The gTuRC (via TUBGCP3 and TUBGCP6) interacts with ACTB and MZT1; the interactions form a luminal bridge that stabilizes the initial structure during complex assembly (By similarity). The gTuRC (via TUBGCP2) interacts with MZT2A/MZT2B and CDK5RAP2 (via CM1 motif); the interactions play a role in gTuRC activation (By similarity).</text>
</comment>
<comment type="subcellular location">
    <subcellularLocation>
        <location evidence="1">Cytoplasm</location>
        <location evidence="1">Cytoskeleton</location>
        <location evidence="1">Microtubule organizing center</location>
        <location evidence="1">Centrosome</location>
    </subcellularLocation>
</comment>
<comment type="alternative products">
    <event type="alternative splicing"/>
    <isoform>
        <id>G5E8P0-1</id>
        <name>1</name>
        <sequence type="displayed"/>
    </isoform>
    <isoform>
        <id>G5E8P0-2</id>
        <name>2</name>
        <sequence type="described" ref="VSP_058269 VSP_058270"/>
    </isoform>
</comment>
<comment type="similarity">
    <text evidence="3">Belongs to the TUBGCP family.</text>
</comment>
<comment type="sequence caution" evidence="3">
    <conflict type="erroneous initiation">
        <sequence resource="EMBL-CDS" id="BAC98230"/>
    </conflict>
    <text>Extended N-terminus.</text>
</comment>
<feature type="chain" id="PRO_0000436164" description="Gamma-tubulin complex component 6">
    <location>
        <begin position="1"/>
        <end position="1769"/>
    </location>
</feature>
<feature type="region of interest" description="Disordered" evidence="2">
    <location>
        <begin position="809"/>
        <end position="842"/>
    </location>
</feature>
<feature type="region of interest" description="Disordered" evidence="2">
    <location>
        <begin position="859"/>
        <end position="881"/>
    </location>
</feature>
<feature type="region of interest" description="Disordered" evidence="2">
    <location>
        <begin position="1284"/>
        <end position="1360"/>
    </location>
</feature>
<feature type="compositionally biased region" description="Polar residues" evidence="2">
    <location>
        <begin position="820"/>
        <end position="831"/>
    </location>
</feature>
<feature type="compositionally biased region" description="Basic and acidic residues" evidence="2">
    <location>
        <begin position="1314"/>
        <end position="1326"/>
    </location>
</feature>
<feature type="compositionally biased region" description="Polar residues" evidence="2">
    <location>
        <begin position="1332"/>
        <end position="1343"/>
    </location>
</feature>
<feature type="splice variant" id="VSP_058269" description="In isoform 2.">
    <original>PQIVDQWEDEGFQSASNLTPDSQSEPSMTPDLD</original>
    <variation>VFLSLSVTLEVWKILLPGTVGKLLSKPQVSRQS</variation>
    <location>
        <begin position="249"/>
        <end position="281"/>
    </location>
</feature>
<feature type="splice variant" id="VSP_058270" description="In isoform 2.">
    <location>
        <begin position="282"/>
        <end position="1769"/>
    </location>
</feature>
<proteinExistence type="evidence at protein level"/>
<reference key="1">
    <citation type="journal article" date="2003" name="DNA Res.">
        <title>Prediction of the coding sequences of mouse homologues of KIAA gene: III. The complete nucleotide sequences of 500 mouse KIAA-homologous cDNAs identified by screening of terminal sequences of cDNA clones randomly sampled from size-fractionated libraries.</title>
        <authorList>
            <person name="Okazaki N."/>
            <person name="Kikuno R."/>
            <person name="Ohara R."/>
            <person name="Inamoto S."/>
            <person name="Koseki H."/>
            <person name="Hiraoka S."/>
            <person name="Saga Y."/>
            <person name="Nagase T."/>
            <person name="Ohara O."/>
            <person name="Koga H."/>
        </authorList>
    </citation>
    <scope>NUCLEOTIDE SEQUENCE [MRNA] (ISOFORM 2)</scope>
    <source>
        <tissue>Brain</tissue>
    </source>
</reference>
<reference key="2">
    <citation type="journal article" date="2009" name="PLoS Biol.">
        <title>Lineage-specific biology revealed by a finished genome assembly of the mouse.</title>
        <authorList>
            <person name="Church D.M."/>
            <person name="Goodstadt L."/>
            <person name="Hillier L.W."/>
            <person name="Zody M.C."/>
            <person name="Goldstein S."/>
            <person name="She X."/>
            <person name="Bult C.J."/>
            <person name="Agarwala R."/>
            <person name="Cherry J.L."/>
            <person name="DiCuccio M."/>
            <person name="Hlavina W."/>
            <person name="Kapustin Y."/>
            <person name="Meric P."/>
            <person name="Maglott D."/>
            <person name="Birtle Z."/>
            <person name="Marques A.C."/>
            <person name="Graves T."/>
            <person name="Zhou S."/>
            <person name="Teague B."/>
            <person name="Potamousis K."/>
            <person name="Churas C."/>
            <person name="Place M."/>
            <person name="Herschleb J."/>
            <person name="Runnheim R."/>
            <person name="Forrest D."/>
            <person name="Amos-Landgraf J."/>
            <person name="Schwartz D.C."/>
            <person name="Cheng Z."/>
            <person name="Lindblad-Toh K."/>
            <person name="Eichler E.E."/>
            <person name="Ponting C.P."/>
        </authorList>
    </citation>
    <scope>NUCLEOTIDE SEQUENCE [LARGE SCALE GENOMIC DNA]</scope>
    <source>
        <strain>C57BL/6J</strain>
    </source>
</reference>
<reference key="3">
    <citation type="submission" date="2005-09" db="EMBL/GenBank/DDBJ databases">
        <authorList>
            <person name="Mural R.J."/>
            <person name="Adams M.D."/>
            <person name="Myers E.W."/>
            <person name="Smith H.O."/>
            <person name="Venter J.C."/>
        </authorList>
    </citation>
    <scope>NUCLEOTIDE SEQUENCE [LARGE SCALE GENOMIC DNA]</scope>
</reference>
<reference key="4">
    <citation type="journal article" date="2005" name="Science">
        <title>The transcriptional landscape of the mammalian genome.</title>
        <authorList>
            <person name="Carninci P."/>
            <person name="Kasukawa T."/>
            <person name="Katayama S."/>
            <person name="Gough J."/>
            <person name="Frith M.C."/>
            <person name="Maeda N."/>
            <person name="Oyama R."/>
            <person name="Ravasi T."/>
            <person name="Lenhard B."/>
            <person name="Wells C."/>
            <person name="Kodzius R."/>
            <person name="Shimokawa K."/>
            <person name="Bajic V.B."/>
            <person name="Brenner S.E."/>
            <person name="Batalov S."/>
            <person name="Forrest A.R."/>
            <person name="Zavolan M."/>
            <person name="Davis M.J."/>
            <person name="Wilming L.G."/>
            <person name="Aidinis V."/>
            <person name="Allen J.E."/>
            <person name="Ambesi-Impiombato A."/>
            <person name="Apweiler R."/>
            <person name="Aturaliya R.N."/>
            <person name="Bailey T.L."/>
            <person name="Bansal M."/>
            <person name="Baxter L."/>
            <person name="Beisel K.W."/>
            <person name="Bersano T."/>
            <person name="Bono H."/>
            <person name="Chalk A.M."/>
            <person name="Chiu K.P."/>
            <person name="Choudhary V."/>
            <person name="Christoffels A."/>
            <person name="Clutterbuck D.R."/>
            <person name="Crowe M.L."/>
            <person name="Dalla E."/>
            <person name="Dalrymple B.P."/>
            <person name="de Bono B."/>
            <person name="Della Gatta G."/>
            <person name="di Bernardo D."/>
            <person name="Down T."/>
            <person name="Engstrom P."/>
            <person name="Fagiolini M."/>
            <person name="Faulkner G."/>
            <person name="Fletcher C.F."/>
            <person name="Fukushima T."/>
            <person name="Furuno M."/>
            <person name="Futaki S."/>
            <person name="Gariboldi M."/>
            <person name="Georgii-Hemming P."/>
            <person name="Gingeras T.R."/>
            <person name="Gojobori T."/>
            <person name="Green R.E."/>
            <person name="Gustincich S."/>
            <person name="Harbers M."/>
            <person name="Hayashi Y."/>
            <person name="Hensch T.K."/>
            <person name="Hirokawa N."/>
            <person name="Hill D."/>
            <person name="Huminiecki L."/>
            <person name="Iacono M."/>
            <person name="Ikeo K."/>
            <person name="Iwama A."/>
            <person name="Ishikawa T."/>
            <person name="Jakt M."/>
            <person name="Kanapin A."/>
            <person name="Katoh M."/>
            <person name="Kawasawa Y."/>
            <person name="Kelso J."/>
            <person name="Kitamura H."/>
            <person name="Kitano H."/>
            <person name="Kollias G."/>
            <person name="Krishnan S.P."/>
            <person name="Kruger A."/>
            <person name="Kummerfeld S.K."/>
            <person name="Kurochkin I.V."/>
            <person name="Lareau L.F."/>
            <person name="Lazarevic D."/>
            <person name="Lipovich L."/>
            <person name="Liu J."/>
            <person name="Liuni S."/>
            <person name="McWilliam S."/>
            <person name="Madan Babu M."/>
            <person name="Madera M."/>
            <person name="Marchionni L."/>
            <person name="Matsuda H."/>
            <person name="Matsuzawa S."/>
            <person name="Miki H."/>
            <person name="Mignone F."/>
            <person name="Miyake S."/>
            <person name="Morris K."/>
            <person name="Mottagui-Tabar S."/>
            <person name="Mulder N."/>
            <person name="Nakano N."/>
            <person name="Nakauchi H."/>
            <person name="Ng P."/>
            <person name="Nilsson R."/>
            <person name="Nishiguchi S."/>
            <person name="Nishikawa S."/>
            <person name="Nori F."/>
            <person name="Ohara O."/>
            <person name="Okazaki Y."/>
            <person name="Orlando V."/>
            <person name="Pang K.C."/>
            <person name="Pavan W.J."/>
            <person name="Pavesi G."/>
            <person name="Pesole G."/>
            <person name="Petrovsky N."/>
            <person name="Piazza S."/>
            <person name="Reed J."/>
            <person name="Reid J.F."/>
            <person name="Ring B.Z."/>
            <person name="Ringwald M."/>
            <person name="Rost B."/>
            <person name="Ruan Y."/>
            <person name="Salzberg S.L."/>
            <person name="Sandelin A."/>
            <person name="Schneider C."/>
            <person name="Schoenbach C."/>
            <person name="Sekiguchi K."/>
            <person name="Semple C.A."/>
            <person name="Seno S."/>
            <person name="Sessa L."/>
            <person name="Sheng Y."/>
            <person name="Shibata Y."/>
            <person name="Shimada H."/>
            <person name="Shimada K."/>
            <person name="Silva D."/>
            <person name="Sinclair B."/>
            <person name="Sperling S."/>
            <person name="Stupka E."/>
            <person name="Sugiura K."/>
            <person name="Sultana R."/>
            <person name="Takenaka Y."/>
            <person name="Taki K."/>
            <person name="Tammoja K."/>
            <person name="Tan S.L."/>
            <person name="Tang S."/>
            <person name="Taylor M.S."/>
            <person name="Tegner J."/>
            <person name="Teichmann S.A."/>
            <person name="Ueda H.R."/>
            <person name="van Nimwegen E."/>
            <person name="Verardo R."/>
            <person name="Wei C.L."/>
            <person name="Yagi K."/>
            <person name="Yamanishi H."/>
            <person name="Zabarovsky E."/>
            <person name="Zhu S."/>
            <person name="Zimmer A."/>
            <person name="Hide W."/>
            <person name="Bult C."/>
            <person name="Grimmond S.M."/>
            <person name="Teasdale R.D."/>
            <person name="Liu E.T."/>
            <person name="Brusic V."/>
            <person name="Quackenbush J."/>
            <person name="Wahlestedt C."/>
            <person name="Mattick J.S."/>
            <person name="Hume D.A."/>
            <person name="Kai C."/>
            <person name="Sasaki D."/>
            <person name="Tomaru Y."/>
            <person name="Fukuda S."/>
            <person name="Kanamori-Katayama M."/>
            <person name="Suzuki M."/>
            <person name="Aoki J."/>
            <person name="Arakawa T."/>
            <person name="Iida J."/>
            <person name="Imamura K."/>
            <person name="Itoh M."/>
            <person name="Kato T."/>
            <person name="Kawaji H."/>
            <person name="Kawagashira N."/>
            <person name="Kawashima T."/>
            <person name="Kojima M."/>
            <person name="Kondo S."/>
            <person name="Konno H."/>
            <person name="Nakano K."/>
            <person name="Ninomiya N."/>
            <person name="Nishio T."/>
            <person name="Okada M."/>
            <person name="Plessy C."/>
            <person name="Shibata K."/>
            <person name="Shiraki T."/>
            <person name="Suzuki S."/>
            <person name="Tagami M."/>
            <person name="Waki K."/>
            <person name="Watahiki A."/>
            <person name="Okamura-Oho Y."/>
            <person name="Suzuki H."/>
            <person name="Kawai J."/>
            <person name="Hayashizaki Y."/>
        </authorList>
    </citation>
    <scope>NUCLEOTIDE SEQUENCE [LARGE SCALE MRNA] OF 1-656 (ISOFORM 1)</scope>
    <source>
        <strain>C57BL/6J</strain>
        <tissue>Lung</tissue>
    </source>
</reference>
<reference key="5">
    <citation type="journal article" date="2004" name="Genome Res.">
        <title>The status, quality, and expansion of the NIH full-length cDNA project: the Mammalian Gene Collection (MGC).</title>
        <authorList>
            <consortium name="The MGC Project Team"/>
        </authorList>
    </citation>
    <scope>NUCLEOTIDE SEQUENCE [LARGE SCALE MRNA] OF 921-1769</scope>
    <source>
        <strain>C57BL/6J</strain>
        <tissue>Embryonic brain</tissue>
    </source>
</reference>
<reference key="6">
    <citation type="journal article" date="2010" name="Cell">
        <title>A tissue-specific atlas of mouse protein phosphorylation and expression.</title>
        <authorList>
            <person name="Huttlin E.L."/>
            <person name="Jedrychowski M.P."/>
            <person name="Elias J.E."/>
            <person name="Goswami T."/>
            <person name="Rad R."/>
            <person name="Beausoleil S.A."/>
            <person name="Villen J."/>
            <person name="Haas W."/>
            <person name="Sowa M.E."/>
            <person name="Gygi S.P."/>
        </authorList>
    </citation>
    <scope>IDENTIFICATION BY MASS SPECTROMETRY [LARGE SCALE ANALYSIS]</scope>
    <source>
        <tissue>Brain</tissue>
    </source>
</reference>
<gene>
    <name type="primary">Tubgcp6</name>
    <name type="synonym">Kiaa1669</name>
</gene>
<dbReference type="EMBL" id="AK129420">
    <property type="protein sequence ID" value="BAC98230.1"/>
    <property type="status" value="ALT_INIT"/>
    <property type="molecule type" value="mRNA"/>
</dbReference>
<dbReference type="EMBL" id="AC113069">
    <property type="status" value="NOT_ANNOTATED_CDS"/>
    <property type="molecule type" value="Genomic_DNA"/>
</dbReference>
<dbReference type="EMBL" id="CH466550">
    <property type="protein sequence ID" value="EDL04376.1"/>
    <property type="molecule type" value="Genomic_DNA"/>
</dbReference>
<dbReference type="EMBL" id="AK052441">
    <property type="protein sequence ID" value="BAC34992.1"/>
    <property type="molecule type" value="mRNA"/>
</dbReference>
<dbReference type="EMBL" id="BC057626">
    <property type="protein sequence ID" value="AAH57626.1"/>
    <property type="molecule type" value="mRNA"/>
</dbReference>
<dbReference type="CCDS" id="CCDS49697.1">
    <molecule id="G5E8P0-1"/>
</dbReference>
<dbReference type="RefSeq" id="NP_001156791.1">
    <molecule id="G5E8P0-1"/>
    <property type="nucleotide sequence ID" value="NM_001163319.1"/>
</dbReference>
<dbReference type="SMR" id="G5E8P0"/>
<dbReference type="FunCoup" id="G5E8P0">
    <property type="interactions" value="1944"/>
</dbReference>
<dbReference type="IntAct" id="G5E8P0">
    <property type="interactions" value="10"/>
</dbReference>
<dbReference type="MINT" id="G5E8P0"/>
<dbReference type="STRING" id="10090.ENSMUSP00000104977"/>
<dbReference type="GlyGen" id="G5E8P0">
    <property type="glycosylation" value="5 sites, 1 O-linked glycan (1 site)"/>
</dbReference>
<dbReference type="iPTMnet" id="G5E8P0"/>
<dbReference type="PhosphoSitePlus" id="G5E8P0"/>
<dbReference type="jPOST" id="G5E8P0"/>
<dbReference type="PaxDb" id="10090-ENSMUSP00000104977"/>
<dbReference type="ProteomicsDB" id="265736">
    <molecule id="G5E8P0-1"/>
</dbReference>
<dbReference type="ProteomicsDB" id="265737">
    <molecule id="G5E8P0-2"/>
</dbReference>
<dbReference type="Pumba" id="G5E8P0"/>
<dbReference type="Antibodypedia" id="52528">
    <property type="antibodies" value="118 antibodies from 24 providers"/>
</dbReference>
<dbReference type="Ensembl" id="ENSMUST00000109353.9">
    <molecule id="G5E8P0-1"/>
    <property type="protein sequence ID" value="ENSMUSP00000104977.3"/>
    <property type="gene ID" value="ENSMUSG00000051786.16"/>
</dbReference>
<dbReference type="GeneID" id="328580"/>
<dbReference type="KEGG" id="mmu:328580"/>
<dbReference type="UCSC" id="uc007xfh.2">
    <molecule id="G5E8P0-1"/>
    <property type="organism name" value="mouse"/>
</dbReference>
<dbReference type="UCSC" id="uc056yzw.1">
    <property type="organism name" value="mouse"/>
</dbReference>
<dbReference type="AGR" id="MGI:2146071"/>
<dbReference type="CTD" id="85378"/>
<dbReference type="MGI" id="MGI:2146071">
    <property type="gene designation" value="Tubgcp6"/>
</dbReference>
<dbReference type="VEuPathDB" id="HostDB:ENSMUSG00000051786"/>
<dbReference type="eggNOG" id="KOG2000">
    <property type="taxonomic scope" value="Eukaryota"/>
</dbReference>
<dbReference type="GeneTree" id="ENSGT00940000157810"/>
<dbReference type="HOGENOM" id="CLU_002518_0_0_1"/>
<dbReference type="InParanoid" id="G5E8P0"/>
<dbReference type="OMA" id="MAPVNAH"/>
<dbReference type="OrthoDB" id="775571at2759"/>
<dbReference type="PhylomeDB" id="G5E8P0"/>
<dbReference type="TreeFam" id="TF106321"/>
<dbReference type="Reactome" id="R-MMU-380270">
    <property type="pathway name" value="Recruitment of mitotic centrosome proteins and complexes"/>
</dbReference>
<dbReference type="Reactome" id="R-MMU-380320">
    <property type="pathway name" value="Recruitment of NuMA to mitotic centrosomes"/>
</dbReference>
<dbReference type="BioGRID-ORCS" id="328580">
    <property type="hits" value="6 hits in 78 CRISPR screens"/>
</dbReference>
<dbReference type="CD-CODE" id="01CA17F3">
    <property type="entry name" value="Centrosome"/>
</dbReference>
<dbReference type="ChiTaRS" id="Tubgcp6">
    <property type="organism name" value="mouse"/>
</dbReference>
<dbReference type="PRO" id="PR:G5E8P0"/>
<dbReference type="Proteomes" id="UP000000589">
    <property type="component" value="Chromosome 15"/>
</dbReference>
<dbReference type="RNAct" id="G5E8P0">
    <property type="molecule type" value="protein"/>
</dbReference>
<dbReference type="Bgee" id="ENSMUSG00000051786">
    <property type="expression patterns" value="Expressed in embryonic post-anal tail and 175 other cell types or tissues"/>
</dbReference>
<dbReference type="ExpressionAtlas" id="G5E8P0">
    <property type="expression patterns" value="baseline and differential"/>
</dbReference>
<dbReference type="GO" id="GO:0005813">
    <property type="term" value="C:centrosome"/>
    <property type="evidence" value="ECO:0007669"/>
    <property type="project" value="UniProtKB-SubCell"/>
</dbReference>
<dbReference type="GO" id="GO:0005737">
    <property type="term" value="C:cytoplasm"/>
    <property type="evidence" value="ECO:0007669"/>
    <property type="project" value="UniProtKB-KW"/>
</dbReference>
<dbReference type="GO" id="GO:0000931">
    <property type="term" value="C:gamma-tubulin ring complex"/>
    <property type="evidence" value="ECO:0007669"/>
    <property type="project" value="Ensembl"/>
</dbReference>
<dbReference type="GO" id="GO:0005874">
    <property type="term" value="C:microtubule"/>
    <property type="evidence" value="ECO:0007669"/>
    <property type="project" value="UniProtKB-KW"/>
</dbReference>
<dbReference type="GO" id="GO:0000922">
    <property type="term" value="C:spindle pole"/>
    <property type="evidence" value="ECO:0007669"/>
    <property type="project" value="InterPro"/>
</dbReference>
<dbReference type="GO" id="GO:0043015">
    <property type="term" value="F:gamma-tubulin binding"/>
    <property type="evidence" value="ECO:0007669"/>
    <property type="project" value="InterPro"/>
</dbReference>
<dbReference type="GO" id="GO:0008017">
    <property type="term" value="F:microtubule binding"/>
    <property type="evidence" value="ECO:0007669"/>
    <property type="project" value="Ensembl"/>
</dbReference>
<dbReference type="GO" id="GO:0007020">
    <property type="term" value="P:microtubule nucleation"/>
    <property type="evidence" value="ECO:0007669"/>
    <property type="project" value="Ensembl"/>
</dbReference>
<dbReference type="FunFam" id="1.20.120.1900:FF:000004">
    <property type="entry name" value="gamma-tubulin complex component 6 isoform X1"/>
    <property type="match status" value="1"/>
</dbReference>
<dbReference type="Gene3D" id="1.20.120.1900">
    <property type="entry name" value="Gamma-tubulin complex, C-terminal domain"/>
    <property type="match status" value="1"/>
</dbReference>
<dbReference type="InterPro" id="IPR007259">
    <property type="entry name" value="GCP"/>
</dbReference>
<dbReference type="InterPro" id="IPR045818">
    <property type="entry name" value="GCP6_N"/>
</dbReference>
<dbReference type="InterPro" id="IPR040457">
    <property type="entry name" value="GCP_C"/>
</dbReference>
<dbReference type="InterPro" id="IPR042241">
    <property type="entry name" value="GCP_C_sf"/>
</dbReference>
<dbReference type="InterPro" id="IPR041470">
    <property type="entry name" value="GCP_N"/>
</dbReference>
<dbReference type="PANTHER" id="PTHR19302">
    <property type="entry name" value="GAMMA TUBULIN COMPLEX PROTEIN"/>
    <property type="match status" value="1"/>
</dbReference>
<dbReference type="PANTHER" id="PTHR19302:SF70">
    <property type="entry name" value="GAMMA-TUBULIN COMPLEX COMPONENT 6"/>
    <property type="match status" value="1"/>
</dbReference>
<dbReference type="Pfam" id="PF19340">
    <property type="entry name" value="GCP6_N"/>
    <property type="match status" value="1"/>
</dbReference>
<dbReference type="Pfam" id="PF04130">
    <property type="entry name" value="GCP_C_terminal"/>
    <property type="match status" value="1"/>
</dbReference>
<dbReference type="Pfam" id="PF17681">
    <property type="entry name" value="GCP_N_terminal"/>
    <property type="match status" value="1"/>
</dbReference>
<organism>
    <name type="scientific">Mus musculus</name>
    <name type="common">Mouse</name>
    <dbReference type="NCBI Taxonomy" id="10090"/>
    <lineage>
        <taxon>Eukaryota</taxon>
        <taxon>Metazoa</taxon>
        <taxon>Chordata</taxon>
        <taxon>Craniata</taxon>
        <taxon>Vertebrata</taxon>
        <taxon>Euteleostomi</taxon>
        <taxon>Mammalia</taxon>
        <taxon>Eutheria</taxon>
        <taxon>Euarchontoglires</taxon>
        <taxon>Glires</taxon>
        <taxon>Rodentia</taxon>
        <taxon>Myomorpha</taxon>
        <taxon>Muroidea</taxon>
        <taxon>Muridae</taxon>
        <taxon>Murinae</taxon>
        <taxon>Mus</taxon>
        <taxon>Mus</taxon>
    </lineage>
</organism>
<keyword id="KW-0025">Alternative splicing</keyword>
<keyword id="KW-0963">Cytoplasm</keyword>
<keyword id="KW-0206">Cytoskeleton</keyword>
<keyword id="KW-0493">Microtubule</keyword>
<keyword id="KW-1185">Reference proteome</keyword>
<accession>G5E8P0</accession>
<accession>Q6PFC6</accession>
<accession>Q6ZPK3</accession>
<accession>Q8BWI2</accession>
<name>GCP6_MOUSE</name>
<protein>
    <recommendedName>
        <fullName>Gamma-tubulin complex component 6</fullName>
        <shortName>GCP-6</shortName>
    </recommendedName>
</protein>
<evidence type="ECO:0000250" key="1">
    <source>
        <dbReference type="UniProtKB" id="Q96RT7"/>
    </source>
</evidence>
<evidence type="ECO:0000256" key="2">
    <source>
        <dbReference type="SAM" id="MobiDB-lite"/>
    </source>
</evidence>
<evidence type="ECO:0000305" key="3"/>
<sequence>MASITQLFDDLCEALLPAAQARPGQRSVNRKRAKRSLKRVAYNALFANLFQEDTHQRQPDSSKLPVKNKVLMLSFDLRVGGLGPEADRLEELVEKLEAAPDCPFVEVASVLDLLVQLAGSGPPQVLRRKRDYFFNNKHAGRNIPYSGYDCYDLSVFEMDVRSFISGEENLCHHTVQEALQVMEAAPGTGLPTVGLFSIGDSCGDRFERDTRVSLFGALVHSRTYDMDVRLDLPPVPDSADFSGLAIKVPQIVDQWEDEGFQSASNLTPDSQSEPSMTPDLDLWEAVLTYEASKRRCWERIGCPPGHREEPYLTEAGRDAFDRFCRLRHGELQALSGGLLQAPKPVLVEESELVKDSLNVLLGVVSATFSLCRPTQAFVVEPGVHVSGASPESISSILSEVAEYGTCYTRLSHFSLQPVVGSLCSRGLVFQAFTSGLRRYLQYYRACVLSTPPTLSLLTIGFLFKKLGRQLRYLAELCGVGTVSLATSGEPRAVFPTGVKLLSYLYQEALDNCSNEHYPVLLSLLKTSCEPYTRFIHDWVYSGVFRDVYGEFMIQVNHEYLSFRDKFYWTHGYVLISKEVEDCVPVFLKHIAHDVYVCGKTINLLKLCCPRHYLCWSDVPVPRISVIFSLEELKEIEKDCAVYVGRMERVARHSCISKEEKELRMEIAKQELIVHAREAASRVLSELSDRQMAEQIAQDTRKREQFQRLKEQFVKDQERRLAARQEELDDDFSYARELRDREKRLKALEEELERKARQALVDHYSKLSAEAARREQKALWRIQRHRLESARLRFLLEDQKCIQEMLRDMEAQQPQEPPSVFPSTGSQVTSTGPEHAGEGHSCDPGFTELHWGCPSLPCASTPSVPKSATEGADDSGAGPFSTGLSITDFLPVDSGEEQPVENTGVPFLEVALQTICSDLSPVAPEPAALTAGGPQATQSEYDFNTILRPAMATSLSPGPFQDVQNSVDSDKQHLLGDMSTKVDSYIHDMQETLPCPHPLSHATPVEGSLQPVGQLLEHMSETTVSTESHASGMAPCQQLSISRHVSDANIKVGDYMSDVALPRPRWNVHGHVSEASIGVGENMAEVAPSRPRWNVHGHVSDASIKIGENMSDVAPSRTRWNIHGHVSDASIKVGENVSDVTPSRPRWNVHGHVSEASIKVGENVSDVTPSRPRWNVHGHVSEASIKVGENVSDVTPSRPRWNVHGHVSDASIRIGENVSDTDLDLQQRGCAQPPLILEEPLPEAEADLKPHQCPPAHVSEAVLGVEAQSPALECGPQLPEKTKPTVCSGFGRTEEGSLQTKTLVAEPSMLGSGIPEEKGPGKSRDAEDLSPCLPSSSQEDTAVPSSPGPSDEVSNTEAEARRWGKEQAYLTDLTKLYHLEQYPDSYDSMSEPPVAHLVHHMLPRAFAFPVDPQVQSAVDESAVQLSELLTLPVLMKRSLMAPLAAHVSLVSKAAVDYFFVELHLETHFEALRHFLLMEDGEFAQSLSDLLFEKLGAGQTPGELLNPLVLNSILSKALQYSLHGDTPHASNLSFALKYLPEVFAPNAPDVLSCLELRYKVDWPLNIVITESCLNKYSGIFSFLLQLKLMMWTLKDICFHLKRTALVSHTAGSVQFRQLQLFKHEMQHFVKVIQGYIANQILHVSWCEFRARLAVVGDLEEIQRAHAEYLHRAVFRGLLTEKAAPVMNIIHSIFSLVLKFRSQLISQNWGPATGPRGAEHPNFPLMQQSYSTFKYYSHFLFKVVTKLVNRGYQPHLEDFLLRINFNNYYQDS</sequence>